<protein>
    <recommendedName>
        <fullName>Glycolipid transfer protein A</fullName>
        <shortName>GLTP-A</shortName>
    </recommendedName>
</protein>
<organism>
    <name type="scientific">Xenopus laevis</name>
    <name type="common">African clawed frog</name>
    <dbReference type="NCBI Taxonomy" id="8355"/>
    <lineage>
        <taxon>Eukaryota</taxon>
        <taxon>Metazoa</taxon>
        <taxon>Chordata</taxon>
        <taxon>Craniata</taxon>
        <taxon>Vertebrata</taxon>
        <taxon>Euteleostomi</taxon>
        <taxon>Amphibia</taxon>
        <taxon>Batrachia</taxon>
        <taxon>Anura</taxon>
        <taxon>Pipoidea</taxon>
        <taxon>Pipidae</taxon>
        <taxon>Xenopodinae</taxon>
        <taxon>Xenopus</taxon>
        <taxon>Xenopus</taxon>
    </lineage>
</organism>
<sequence>MSLLLQHQFKPLPADKQIDTCSFLDSVSHLPAFFDCLGSAIFSPIKADITGNITKIRSVYESNPTKFKTLQMILEGEKELHGPQWPKVGATLALMWLKRGLKFIQVMLQSIADGERDDQNPNLIKVNITKAYEIALQKYHGWLVQKLFQTALFAAPYKDVFLKALSKGQTVKEEECIEKIRQFLVNYTTTIEAIYIMYNKMNAELDYKA</sequence>
<name>GLTPA_XENLA</name>
<dbReference type="EMBL" id="BC082857">
    <property type="protein sequence ID" value="AAH82857.1"/>
    <property type="molecule type" value="mRNA"/>
</dbReference>
<dbReference type="RefSeq" id="NP_001088061.1">
    <property type="nucleotide sequence ID" value="NM_001094592.1"/>
</dbReference>
<dbReference type="SMR" id="Q63ZQ3"/>
<dbReference type="DNASU" id="494756"/>
<dbReference type="GeneID" id="494756"/>
<dbReference type="KEGG" id="xla:494756"/>
<dbReference type="AGR" id="Xenbase:XB-GENE-6255320"/>
<dbReference type="CTD" id="494756"/>
<dbReference type="Xenbase" id="XB-GENE-6255320">
    <property type="gene designation" value="gltp.S"/>
</dbReference>
<dbReference type="OMA" id="EMHGAEW"/>
<dbReference type="OrthoDB" id="205255at2759"/>
<dbReference type="Proteomes" id="UP000186698">
    <property type="component" value="Chromosome 1S"/>
</dbReference>
<dbReference type="Bgee" id="494756">
    <property type="expression patterns" value="Expressed in gastrula and 18 other cell types or tissues"/>
</dbReference>
<dbReference type="GO" id="GO:0005829">
    <property type="term" value="C:cytosol"/>
    <property type="evidence" value="ECO:0000318"/>
    <property type="project" value="GO_Central"/>
</dbReference>
<dbReference type="GO" id="GO:0016020">
    <property type="term" value="C:membrane"/>
    <property type="evidence" value="ECO:0007669"/>
    <property type="project" value="TreeGrafter"/>
</dbReference>
<dbReference type="GO" id="GO:1902387">
    <property type="term" value="F:ceramide 1-phosphate binding"/>
    <property type="evidence" value="ECO:0000318"/>
    <property type="project" value="GO_Central"/>
</dbReference>
<dbReference type="GO" id="GO:1902388">
    <property type="term" value="F:ceramide 1-phosphate transfer activity"/>
    <property type="evidence" value="ECO:0000318"/>
    <property type="project" value="GO_Central"/>
</dbReference>
<dbReference type="GO" id="GO:0035627">
    <property type="term" value="P:ceramide transport"/>
    <property type="evidence" value="ECO:0000318"/>
    <property type="project" value="GO_Central"/>
</dbReference>
<dbReference type="GO" id="GO:0120009">
    <property type="term" value="P:intermembrane lipid transfer"/>
    <property type="evidence" value="ECO:0000318"/>
    <property type="project" value="GO_Central"/>
</dbReference>
<dbReference type="FunFam" id="1.10.3520.10:FF:000003">
    <property type="entry name" value="glycolipid transfer protein"/>
    <property type="match status" value="1"/>
</dbReference>
<dbReference type="Gene3D" id="1.10.3520.10">
    <property type="entry name" value="Glycolipid transfer protein"/>
    <property type="match status" value="1"/>
</dbReference>
<dbReference type="InterPro" id="IPR036497">
    <property type="entry name" value="GLTP_sf"/>
</dbReference>
<dbReference type="InterPro" id="IPR014830">
    <property type="entry name" value="Glycolipid_transfer_prot_dom"/>
</dbReference>
<dbReference type="PANTHER" id="PTHR10219:SF97">
    <property type="entry name" value="GLYCOLIPID TRANSFER PROTEIN"/>
    <property type="match status" value="1"/>
</dbReference>
<dbReference type="PANTHER" id="PTHR10219">
    <property type="entry name" value="GLYCOLIPID TRANSFER PROTEIN-RELATED"/>
    <property type="match status" value="1"/>
</dbReference>
<dbReference type="Pfam" id="PF08718">
    <property type="entry name" value="GLTP"/>
    <property type="match status" value="1"/>
</dbReference>
<dbReference type="SUPFAM" id="SSF110004">
    <property type="entry name" value="Glycolipid transfer protein, GLTP"/>
    <property type="match status" value="1"/>
</dbReference>
<feature type="chain" id="PRO_0000343611" description="Glycolipid transfer protein A">
    <location>
        <begin position="1"/>
        <end position="209"/>
    </location>
</feature>
<feature type="repeat" description="1">
    <location>
        <begin position="45"/>
        <end position="55"/>
    </location>
</feature>
<feature type="repeat" description="2">
    <location>
        <begin position="56"/>
        <end position="66"/>
    </location>
</feature>
<feature type="region of interest" description="2 X 12 AA approximate tandem repeats">
    <location>
        <begin position="45"/>
        <end position="66"/>
    </location>
</feature>
<feature type="binding site" evidence="2">
    <location>
        <begin position="48"/>
        <end position="55"/>
    </location>
    <ligand>
        <name>beta-D-galactosyl-(1-&gt;4)-beta-D-glucosyl-(1&lt;-&gt;1)-N-[(9Z)-octadecenoyl]-sphing-4-enine</name>
        <dbReference type="ChEBI" id="CHEBI:131557"/>
    </ligand>
</feature>
<feature type="binding site" evidence="2">
    <location>
        <position position="140"/>
    </location>
    <ligand>
        <name>beta-D-galactosyl-(1-&gt;4)-beta-D-glucosyl-(1&lt;-&gt;1)-N-[(9Z)-octadecenoyl]-sphing-4-enine</name>
        <dbReference type="ChEBI" id="CHEBI:131557"/>
    </ligand>
</feature>
<feature type="binding site" evidence="2">
    <location>
        <position position="207"/>
    </location>
    <ligand>
        <name>beta-D-galactosyl-(1-&gt;4)-beta-D-glucosyl-(1&lt;-&gt;1)-N-[(9Z)-octadecenoyl]-sphing-4-enine</name>
        <dbReference type="ChEBI" id="CHEBI:131557"/>
    </ligand>
</feature>
<keyword id="KW-0963">Cytoplasm</keyword>
<keyword id="KW-0445">Lipid transport</keyword>
<keyword id="KW-1185">Reference proteome</keyword>
<keyword id="KW-0677">Repeat</keyword>
<keyword id="KW-0813">Transport</keyword>
<evidence type="ECO:0000250" key="1"/>
<evidence type="ECO:0000250" key="2">
    <source>
        <dbReference type="UniProtKB" id="Q9NZD2"/>
    </source>
</evidence>
<evidence type="ECO:0000305" key="3"/>
<reference key="1">
    <citation type="submission" date="2004-09" db="EMBL/GenBank/DDBJ databases">
        <authorList>
            <consortium name="NIH - Xenopus Gene Collection (XGC) project"/>
        </authorList>
    </citation>
    <scope>NUCLEOTIDE SEQUENCE [LARGE SCALE MRNA]</scope>
    <source>
        <tissue>Embryo</tissue>
    </source>
</reference>
<gene>
    <name type="primary">gltp-a</name>
</gene>
<comment type="function">
    <text evidence="1">Accelerates the intermembrane transfer of various glycolipids. Catalyzes the transfer of various glycosphingolipids between membranes but does not catalyze the transfer of phospholipids. May be involved in the intracellular translocation of glucosylceramides (By similarity).</text>
</comment>
<comment type="subcellular location">
    <subcellularLocation>
        <location evidence="1">Cytoplasm</location>
    </subcellularLocation>
</comment>
<comment type="similarity">
    <text evidence="3">Belongs to the GLTP family.</text>
</comment>
<accession>Q63ZQ3</accession>
<proteinExistence type="evidence at transcript level"/>